<sequence length="231" mass="26497">MKVVIVTSVASLLDASIQFQKTACRHHCNYLSMQIVKEIEEFGTINEKNLEFATWKDVIQNDEIDALVFYRVKQISISTGVLYESMMRNRTKPISMFFVRDCLAFDGDPPSFRMTSCNINAYNRNKIKDLIILMNMKTCNKKIIGEFIIDNFGSVNALLSIINSNVTWVTSVINNSNGRGINIRVSNNKMLTITSFRRFVNKLKMYKTTKCASQLDNLCTEINKMDIIDKK</sequence>
<comment type="subcellular location">
    <subcellularLocation>
        <location evidence="1">Host nucleus</location>
        <location evidence="1">Host nucleolus</location>
    </subcellularLocation>
</comment>
<comment type="induction">
    <text evidence="1">Expressed in the early phase of the viral replicative cycle.</text>
</comment>
<comment type="similarity">
    <text evidence="2">Belongs to the orthopoxvirus OPG058 family.</text>
</comment>
<reference key="1">
    <citation type="journal article" date="1993" name="Virus Res.">
        <title>Analysis of the nucleotide sequence of a 43 kbp segment of the genome of variola virus India-1967 strain.</title>
        <authorList>
            <person name="Shchelkunov S.N."/>
            <person name="Blinov V.M."/>
            <person name="Resenchuk S.M."/>
            <person name="Totmenin A.V."/>
            <person name="Sandakhchiev L.S."/>
        </authorList>
    </citation>
    <scope>NUCLEOTIDE SEQUENCE [GENOMIC DNA]</scope>
</reference>
<reference key="2">
    <citation type="journal article" date="1993" name="FEBS Lett.">
        <title>Genes of variola and vaccinia viruses necessary to overcome the host protective mechanisms.</title>
        <authorList>
            <person name="Shchelkunov S.N."/>
            <person name="Blinov V.M."/>
            <person name="Sandakhchiev L.S."/>
        </authorList>
    </citation>
    <scope>NUCLEOTIDE SEQUENCE [GENOMIC DNA]</scope>
</reference>
<keyword id="KW-0244">Early protein</keyword>
<keyword id="KW-1048">Host nucleus</keyword>
<keyword id="KW-1185">Reference proteome</keyword>
<evidence type="ECO:0000250" key="1">
    <source>
        <dbReference type="UniProtKB" id="Q80HX3"/>
    </source>
</evidence>
<evidence type="ECO:0000305" key="2"/>
<organismHost>
    <name type="scientific">Homo sapiens</name>
    <name type="common">Human</name>
    <dbReference type="NCBI Taxonomy" id="9606"/>
</organismHost>
<dbReference type="EMBL" id="X69198">
    <property type="protein sequence ID" value="CAA48981.1"/>
    <property type="molecule type" value="Genomic_DNA"/>
</dbReference>
<dbReference type="PIR" id="B36841">
    <property type="entry name" value="B36841"/>
</dbReference>
<dbReference type="RefSeq" id="NP_042084.1">
    <property type="nucleotide sequence ID" value="NC_001611.1"/>
</dbReference>
<dbReference type="SMR" id="P0DSU9"/>
<dbReference type="GeneID" id="1486577"/>
<dbReference type="KEGG" id="vg:1486577"/>
<dbReference type="Proteomes" id="UP000002060">
    <property type="component" value="Segment"/>
</dbReference>
<dbReference type="GO" id="GO:0044196">
    <property type="term" value="C:host cell nucleolus"/>
    <property type="evidence" value="ECO:0007669"/>
    <property type="project" value="UniProtKB-SubCell"/>
</dbReference>
<dbReference type="InterPro" id="IPR006798">
    <property type="entry name" value="Poxvirus_F16"/>
</dbReference>
<dbReference type="Pfam" id="PF04708">
    <property type="entry name" value="Pox_F16"/>
    <property type="match status" value="1"/>
</dbReference>
<dbReference type="PIRSF" id="PIRSF015792">
    <property type="entry name" value="VAC_F16L"/>
    <property type="match status" value="1"/>
</dbReference>
<protein>
    <recommendedName>
        <fullName>Protein OPG061</fullName>
    </recommendedName>
    <alternativeName>
        <fullName>Protein F16</fullName>
    </alternativeName>
</protein>
<gene>
    <name type="primary">OPG061</name>
    <name type="ORF">C20L</name>
    <name type="ORF">F16L</name>
</gene>
<name>PG061_VAR67</name>
<feature type="chain" id="PRO_0000099517" description="Protein OPG061">
    <location>
        <begin position="1"/>
        <end position="231"/>
    </location>
</feature>
<accession>P0DSU9</accession>
<accession>P33874</accession>
<organism>
    <name type="scientific">Variola virus (isolate Human/India/Ind3/1967)</name>
    <name type="common">VARV</name>
    <name type="synonym">Smallpox virus</name>
    <dbReference type="NCBI Taxonomy" id="587200"/>
    <lineage>
        <taxon>Viruses</taxon>
        <taxon>Varidnaviria</taxon>
        <taxon>Bamfordvirae</taxon>
        <taxon>Nucleocytoviricota</taxon>
        <taxon>Pokkesviricetes</taxon>
        <taxon>Chitovirales</taxon>
        <taxon>Poxviridae</taxon>
        <taxon>Chordopoxvirinae</taxon>
        <taxon>Orthopoxvirus</taxon>
        <taxon>Variola virus</taxon>
    </lineage>
</organism>
<proteinExistence type="inferred from homology"/>